<comment type="function">
    <text evidence="1">This protein binds to 23S rRNA in the presence of protein L20.</text>
</comment>
<comment type="subunit">
    <text evidence="1">Part of the 50S ribosomal subunit. Contacts protein L20.</text>
</comment>
<comment type="similarity">
    <text evidence="1">Belongs to the bacterial ribosomal protein bL21 family.</text>
</comment>
<sequence>MYAVFQSGGKQHRVAEGHTVRLEKLEVATGDTVEFDQVLLVADGETVHVGAPLVAGGKVVAEVVSHGRAEKVTIVKFRRRKHHDKKMGHRQWFTEVKITAINA</sequence>
<evidence type="ECO:0000255" key="1">
    <source>
        <dbReference type="HAMAP-Rule" id="MF_01363"/>
    </source>
</evidence>
<evidence type="ECO:0000305" key="2"/>
<proteinExistence type="inferred from homology"/>
<accession>A8FRU2</accession>
<reference key="1">
    <citation type="submission" date="2007-08" db="EMBL/GenBank/DDBJ databases">
        <title>Complete sequence of Shewanella sediminis HAW-EB3.</title>
        <authorList>
            <consortium name="US DOE Joint Genome Institute"/>
            <person name="Copeland A."/>
            <person name="Lucas S."/>
            <person name="Lapidus A."/>
            <person name="Barry K."/>
            <person name="Glavina del Rio T."/>
            <person name="Dalin E."/>
            <person name="Tice H."/>
            <person name="Pitluck S."/>
            <person name="Chertkov O."/>
            <person name="Brettin T."/>
            <person name="Bruce D."/>
            <person name="Detter J.C."/>
            <person name="Han C."/>
            <person name="Schmutz J."/>
            <person name="Larimer F."/>
            <person name="Land M."/>
            <person name="Hauser L."/>
            <person name="Kyrpides N."/>
            <person name="Kim E."/>
            <person name="Zhao J.-S."/>
            <person name="Richardson P."/>
        </authorList>
    </citation>
    <scope>NUCLEOTIDE SEQUENCE [LARGE SCALE GENOMIC DNA]</scope>
    <source>
        <strain>HAW-EB3</strain>
    </source>
</reference>
<keyword id="KW-1185">Reference proteome</keyword>
<keyword id="KW-0687">Ribonucleoprotein</keyword>
<keyword id="KW-0689">Ribosomal protein</keyword>
<keyword id="KW-0694">RNA-binding</keyword>
<keyword id="KW-0699">rRNA-binding</keyword>
<organism>
    <name type="scientific">Shewanella sediminis (strain HAW-EB3)</name>
    <dbReference type="NCBI Taxonomy" id="425104"/>
    <lineage>
        <taxon>Bacteria</taxon>
        <taxon>Pseudomonadati</taxon>
        <taxon>Pseudomonadota</taxon>
        <taxon>Gammaproteobacteria</taxon>
        <taxon>Alteromonadales</taxon>
        <taxon>Shewanellaceae</taxon>
        <taxon>Shewanella</taxon>
    </lineage>
</organism>
<feature type="chain" id="PRO_1000087001" description="Large ribosomal subunit protein bL21">
    <location>
        <begin position="1"/>
        <end position="103"/>
    </location>
</feature>
<name>RL21_SHESH</name>
<dbReference type="EMBL" id="CP000821">
    <property type="protein sequence ID" value="ABV35565.1"/>
    <property type="molecule type" value="Genomic_DNA"/>
</dbReference>
<dbReference type="RefSeq" id="WP_012141301.1">
    <property type="nucleotide sequence ID" value="NC_009831.1"/>
</dbReference>
<dbReference type="SMR" id="A8FRU2"/>
<dbReference type="STRING" id="425104.Ssed_0954"/>
<dbReference type="KEGG" id="sse:Ssed_0954"/>
<dbReference type="eggNOG" id="COG0261">
    <property type="taxonomic scope" value="Bacteria"/>
</dbReference>
<dbReference type="HOGENOM" id="CLU_061463_3_3_6"/>
<dbReference type="OrthoDB" id="9813334at2"/>
<dbReference type="Proteomes" id="UP000002015">
    <property type="component" value="Chromosome"/>
</dbReference>
<dbReference type="GO" id="GO:0005737">
    <property type="term" value="C:cytoplasm"/>
    <property type="evidence" value="ECO:0007669"/>
    <property type="project" value="UniProtKB-ARBA"/>
</dbReference>
<dbReference type="GO" id="GO:1990904">
    <property type="term" value="C:ribonucleoprotein complex"/>
    <property type="evidence" value="ECO:0007669"/>
    <property type="project" value="UniProtKB-KW"/>
</dbReference>
<dbReference type="GO" id="GO:0005840">
    <property type="term" value="C:ribosome"/>
    <property type="evidence" value="ECO:0007669"/>
    <property type="project" value="UniProtKB-KW"/>
</dbReference>
<dbReference type="GO" id="GO:0019843">
    <property type="term" value="F:rRNA binding"/>
    <property type="evidence" value="ECO:0007669"/>
    <property type="project" value="UniProtKB-UniRule"/>
</dbReference>
<dbReference type="GO" id="GO:0003735">
    <property type="term" value="F:structural constituent of ribosome"/>
    <property type="evidence" value="ECO:0007669"/>
    <property type="project" value="InterPro"/>
</dbReference>
<dbReference type="GO" id="GO:0006412">
    <property type="term" value="P:translation"/>
    <property type="evidence" value="ECO:0007669"/>
    <property type="project" value="UniProtKB-UniRule"/>
</dbReference>
<dbReference type="HAMAP" id="MF_01363">
    <property type="entry name" value="Ribosomal_bL21"/>
    <property type="match status" value="1"/>
</dbReference>
<dbReference type="InterPro" id="IPR028909">
    <property type="entry name" value="bL21-like"/>
</dbReference>
<dbReference type="InterPro" id="IPR036164">
    <property type="entry name" value="bL21-like_sf"/>
</dbReference>
<dbReference type="InterPro" id="IPR001787">
    <property type="entry name" value="Ribosomal_bL21"/>
</dbReference>
<dbReference type="InterPro" id="IPR018258">
    <property type="entry name" value="Ribosomal_bL21_CS"/>
</dbReference>
<dbReference type="NCBIfam" id="TIGR00061">
    <property type="entry name" value="L21"/>
    <property type="match status" value="1"/>
</dbReference>
<dbReference type="PANTHER" id="PTHR21349">
    <property type="entry name" value="50S RIBOSOMAL PROTEIN L21"/>
    <property type="match status" value="1"/>
</dbReference>
<dbReference type="PANTHER" id="PTHR21349:SF0">
    <property type="entry name" value="LARGE RIBOSOMAL SUBUNIT PROTEIN BL21M"/>
    <property type="match status" value="1"/>
</dbReference>
<dbReference type="Pfam" id="PF00829">
    <property type="entry name" value="Ribosomal_L21p"/>
    <property type="match status" value="1"/>
</dbReference>
<dbReference type="SUPFAM" id="SSF141091">
    <property type="entry name" value="L21p-like"/>
    <property type="match status" value="1"/>
</dbReference>
<dbReference type="PROSITE" id="PS01169">
    <property type="entry name" value="RIBOSOMAL_L21"/>
    <property type="match status" value="1"/>
</dbReference>
<protein>
    <recommendedName>
        <fullName evidence="1">Large ribosomal subunit protein bL21</fullName>
    </recommendedName>
    <alternativeName>
        <fullName evidence="2">50S ribosomal protein L21</fullName>
    </alternativeName>
</protein>
<gene>
    <name evidence="1" type="primary">rplU</name>
    <name type="ordered locus">Ssed_0954</name>
</gene>